<proteinExistence type="inferred from homology"/>
<feature type="chain" id="PRO_0000231297" description="UDP-N-acetylglucosamine 1-carboxyvinyltransferase">
    <location>
        <begin position="1"/>
        <end position="422"/>
    </location>
</feature>
<feature type="active site" description="Proton donor" evidence="1">
    <location>
        <position position="116"/>
    </location>
</feature>
<feature type="binding site" evidence="1">
    <location>
        <begin position="23"/>
        <end position="24"/>
    </location>
    <ligand>
        <name>phosphoenolpyruvate</name>
        <dbReference type="ChEBI" id="CHEBI:58702"/>
    </ligand>
</feature>
<feature type="binding site" evidence="1">
    <location>
        <position position="92"/>
    </location>
    <ligand>
        <name>UDP-N-acetyl-alpha-D-glucosamine</name>
        <dbReference type="ChEBI" id="CHEBI:57705"/>
    </ligand>
</feature>
<feature type="binding site" evidence="1">
    <location>
        <begin position="121"/>
        <end position="125"/>
    </location>
    <ligand>
        <name>UDP-N-acetyl-alpha-D-glucosamine</name>
        <dbReference type="ChEBI" id="CHEBI:57705"/>
    </ligand>
</feature>
<feature type="binding site" evidence="1">
    <location>
        <begin position="161"/>
        <end position="164"/>
    </location>
    <ligand>
        <name>UDP-N-acetyl-alpha-D-glucosamine</name>
        <dbReference type="ChEBI" id="CHEBI:57705"/>
    </ligand>
</feature>
<feature type="binding site" evidence="1">
    <location>
        <position position="306"/>
    </location>
    <ligand>
        <name>UDP-N-acetyl-alpha-D-glucosamine</name>
        <dbReference type="ChEBI" id="CHEBI:57705"/>
    </ligand>
</feature>
<feature type="binding site" evidence="1">
    <location>
        <position position="328"/>
    </location>
    <ligand>
        <name>UDP-N-acetyl-alpha-D-glucosamine</name>
        <dbReference type="ChEBI" id="CHEBI:57705"/>
    </ligand>
</feature>
<feature type="modified residue" description="2-(S-cysteinyl)pyruvic acid O-phosphothioketal" evidence="1">
    <location>
        <position position="116"/>
    </location>
</feature>
<accession>Q5E7V0</accession>
<keyword id="KW-0131">Cell cycle</keyword>
<keyword id="KW-0132">Cell division</keyword>
<keyword id="KW-0133">Cell shape</keyword>
<keyword id="KW-0961">Cell wall biogenesis/degradation</keyword>
<keyword id="KW-0963">Cytoplasm</keyword>
<keyword id="KW-0573">Peptidoglycan synthesis</keyword>
<keyword id="KW-0670">Pyruvate</keyword>
<keyword id="KW-1185">Reference proteome</keyword>
<keyword id="KW-0808">Transferase</keyword>
<protein>
    <recommendedName>
        <fullName evidence="1">UDP-N-acetylglucosamine 1-carboxyvinyltransferase</fullName>
        <ecNumber evidence="1">2.5.1.7</ecNumber>
    </recommendedName>
    <alternativeName>
        <fullName evidence="1">Enoylpyruvate transferase</fullName>
    </alternativeName>
    <alternativeName>
        <fullName evidence="1">UDP-N-acetylglucosamine enolpyruvyl transferase</fullName>
        <shortName evidence="1">EPT</shortName>
    </alternativeName>
</protein>
<dbReference type="EC" id="2.5.1.7" evidence="1"/>
<dbReference type="EMBL" id="CP000020">
    <property type="protein sequence ID" value="AAW84896.1"/>
    <property type="molecule type" value="Genomic_DNA"/>
</dbReference>
<dbReference type="RefSeq" id="WP_011261192.1">
    <property type="nucleotide sequence ID" value="NC_006840.2"/>
</dbReference>
<dbReference type="RefSeq" id="YP_203784.1">
    <property type="nucleotide sequence ID" value="NC_006840.2"/>
</dbReference>
<dbReference type="SMR" id="Q5E7V0"/>
<dbReference type="STRING" id="312309.VF_0401"/>
<dbReference type="EnsemblBacteria" id="AAW84896">
    <property type="protein sequence ID" value="AAW84896"/>
    <property type="gene ID" value="VF_0401"/>
</dbReference>
<dbReference type="GeneID" id="54163028"/>
<dbReference type="KEGG" id="vfi:VF_0401"/>
<dbReference type="PATRIC" id="fig|312309.11.peg.391"/>
<dbReference type="eggNOG" id="COG0766">
    <property type="taxonomic scope" value="Bacteria"/>
</dbReference>
<dbReference type="HOGENOM" id="CLU_027387_0_0_6"/>
<dbReference type="OrthoDB" id="9803760at2"/>
<dbReference type="UniPathway" id="UPA00219"/>
<dbReference type="Proteomes" id="UP000000537">
    <property type="component" value="Chromosome I"/>
</dbReference>
<dbReference type="GO" id="GO:0005737">
    <property type="term" value="C:cytoplasm"/>
    <property type="evidence" value="ECO:0007669"/>
    <property type="project" value="UniProtKB-SubCell"/>
</dbReference>
<dbReference type="GO" id="GO:0008760">
    <property type="term" value="F:UDP-N-acetylglucosamine 1-carboxyvinyltransferase activity"/>
    <property type="evidence" value="ECO:0007669"/>
    <property type="project" value="UniProtKB-UniRule"/>
</dbReference>
<dbReference type="GO" id="GO:0051301">
    <property type="term" value="P:cell division"/>
    <property type="evidence" value="ECO:0007669"/>
    <property type="project" value="UniProtKB-KW"/>
</dbReference>
<dbReference type="GO" id="GO:0071555">
    <property type="term" value="P:cell wall organization"/>
    <property type="evidence" value="ECO:0007669"/>
    <property type="project" value="UniProtKB-KW"/>
</dbReference>
<dbReference type="GO" id="GO:0009252">
    <property type="term" value="P:peptidoglycan biosynthetic process"/>
    <property type="evidence" value="ECO:0007669"/>
    <property type="project" value="UniProtKB-UniRule"/>
</dbReference>
<dbReference type="GO" id="GO:0008360">
    <property type="term" value="P:regulation of cell shape"/>
    <property type="evidence" value="ECO:0007669"/>
    <property type="project" value="UniProtKB-KW"/>
</dbReference>
<dbReference type="GO" id="GO:0019277">
    <property type="term" value="P:UDP-N-acetylgalactosamine biosynthetic process"/>
    <property type="evidence" value="ECO:0007669"/>
    <property type="project" value="InterPro"/>
</dbReference>
<dbReference type="CDD" id="cd01555">
    <property type="entry name" value="UdpNAET"/>
    <property type="match status" value="1"/>
</dbReference>
<dbReference type="FunFam" id="3.65.10.10:FF:000001">
    <property type="entry name" value="UDP-N-acetylglucosamine 1-carboxyvinyltransferase"/>
    <property type="match status" value="1"/>
</dbReference>
<dbReference type="Gene3D" id="3.65.10.10">
    <property type="entry name" value="Enolpyruvate transferase domain"/>
    <property type="match status" value="2"/>
</dbReference>
<dbReference type="HAMAP" id="MF_00111">
    <property type="entry name" value="MurA"/>
    <property type="match status" value="1"/>
</dbReference>
<dbReference type="InterPro" id="IPR001986">
    <property type="entry name" value="Enolpyruvate_Tfrase_dom"/>
</dbReference>
<dbReference type="InterPro" id="IPR036968">
    <property type="entry name" value="Enolpyruvate_Tfrase_sf"/>
</dbReference>
<dbReference type="InterPro" id="IPR050068">
    <property type="entry name" value="MurA_subfamily"/>
</dbReference>
<dbReference type="InterPro" id="IPR013792">
    <property type="entry name" value="RNA3'P_cycl/enolpyr_Trfase_a/b"/>
</dbReference>
<dbReference type="InterPro" id="IPR005750">
    <property type="entry name" value="UDP_GlcNAc_COvinyl_MurA"/>
</dbReference>
<dbReference type="NCBIfam" id="TIGR01072">
    <property type="entry name" value="murA"/>
    <property type="match status" value="1"/>
</dbReference>
<dbReference type="NCBIfam" id="NF006873">
    <property type="entry name" value="PRK09369.1"/>
    <property type="match status" value="1"/>
</dbReference>
<dbReference type="PANTHER" id="PTHR43783">
    <property type="entry name" value="UDP-N-ACETYLGLUCOSAMINE 1-CARBOXYVINYLTRANSFERASE"/>
    <property type="match status" value="1"/>
</dbReference>
<dbReference type="PANTHER" id="PTHR43783:SF1">
    <property type="entry name" value="UDP-N-ACETYLGLUCOSAMINE 1-CARBOXYVINYLTRANSFERASE"/>
    <property type="match status" value="1"/>
</dbReference>
<dbReference type="Pfam" id="PF00275">
    <property type="entry name" value="EPSP_synthase"/>
    <property type="match status" value="1"/>
</dbReference>
<dbReference type="SUPFAM" id="SSF55205">
    <property type="entry name" value="EPT/RTPC-like"/>
    <property type="match status" value="1"/>
</dbReference>
<organism>
    <name type="scientific">Aliivibrio fischeri (strain ATCC 700601 / ES114)</name>
    <name type="common">Vibrio fischeri</name>
    <dbReference type="NCBI Taxonomy" id="312309"/>
    <lineage>
        <taxon>Bacteria</taxon>
        <taxon>Pseudomonadati</taxon>
        <taxon>Pseudomonadota</taxon>
        <taxon>Gammaproteobacteria</taxon>
        <taxon>Vibrionales</taxon>
        <taxon>Vibrionaceae</taxon>
        <taxon>Aliivibrio</taxon>
    </lineage>
</organism>
<sequence length="422" mass="44682">MYKFRIQGSDKPLSGEVTISGAKNAALPILFASLLAEEPVEVANVPKLRDVDTTMELLKRLGAEVSRNGSVHIDASGVNDFCAPYDLVKTMRASIWALGPLVARFGKGQVSLPGGCAIGARPVDLHIHGLEQLGATIKLEEGYVKAEVDGRLKGAHIVMDKVSVGATITVMCAATLAEGTTVLENAAREPEIVDTANFLNAIGAKVSGMGTDTITIEGVERLGGGYHEVVADRIETGTFLVAAAVSGGKIVCKNTKAHLLEAVLAKLEEAGADVQTGDDWISLDMTGRELKAVNIRTAPHPAFPTDMQAQFTLLNMMAKGSGIITETIFENRFMHIPELQRMGAHAEIEGNTAICGDTDGLSGAQVMATDLRASASLVIAGCIAKGETIVDRIYHIARGYDKIEDKLTALGANIERVHSDDL</sequence>
<evidence type="ECO:0000255" key="1">
    <source>
        <dbReference type="HAMAP-Rule" id="MF_00111"/>
    </source>
</evidence>
<comment type="function">
    <text evidence="1">Cell wall formation. Adds enolpyruvyl to UDP-N-acetylglucosamine.</text>
</comment>
<comment type="catalytic activity">
    <reaction evidence="1">
        <text>phosphoenolpyruvate + UDP-N-acetyl-alpha-D-glucosamine = UDP-N-acetyl-3-O-(1-carboxyvinyl)-alpha-D-glucosamine + phosphate</text>
        <dbReference type="Rhea" id="RHEA:18681"/>
        <dbReference type="ChEBI" id="CHEBI:43474"/>
        <dbReference type="ChEBI" id="CHEBI:57705"/>
        <dbReference type="ChEBI" id="CHEBI:58702"/>
        <dbReference type="ChEBI" id="CHEBI:68483"/>
        <dbReference type="EC" id="2.5.1.7"/>
    </reaction>
</comment>
<comment type="pathway">
    <text evidence="1">Cell wall biogenesis; peptidoglycan biosynthesis.</text>
</comment>
<comment type="subcellular location">
    <subcellularLocation>
        <location evidence="1">Cytoplasm</location>
    </subcellularLocation>
</comment>
<comment type="similarity">
    <text evidence="1">Belongs to the EPSP synthase family. MurA subfamily.</text>
</comment>
<gene>
    <name evidence="1" type="primary">murA</name>
    <name type="ordered locus">VF_0401</name>
</gene>
<reference key="1">
    <citation type="journal article" date="2005" name="Proc. Natl. Acad. Sci. U.S.A.">
        <title>Complete genome sequence of Vibrio fischeri: a symbiotic bacterium with pathogenic congeners.</title>
        <authorList>
            <person name="Ruby E.G."/>
            <person name="Urbanowski M."/>
            <person name="Campbell J."/>
            <person name="Dunn A."/>
            <person name="Faini M."/>
            <person name="Gunsalus R."/>
            <person name="Lostroh P."/>
            <person name="Lupp C."/>
            <person name="McCann J."/>
            <person name="Millikan D."/>
            <person name="Schaefer A."/>
            <person name="Stabb E."/>
            <person name="Stevens A."/>
            <person name="Visick K."/>
            <person name="Whistler C."/>
            <person name="Greenberg E.P."/>
        </authorList>
    </citation>
    <scope>NUCLEOTIDE SEQUENCE [LARGE SCALE GENOMIC DNA]</scope>
    <source>
        <strain>ATCC 700601 / ES114</strain>
    </source>
</reference>
<name>MURA_ALIF1</name>